<gene>
    <name evidence="1" type="primary">pyrB</name>
    <name type="ordered locus">HPSH_01890</name>
</gene>
<comment type="function">
    <text evidence="1">Catalyzes the condensation of carbamoyl phosphate and aspartate to form carbamoyl aspartate and inorganic phosphate, the committed step in the de novo pyrimidine nucleotide biosynthesis pathway.</text>
</comment>
<comment type="catalytic activity">
    <reaction evidence="1">
        <text>carbamoyl phosphate + L-aspartate = N-carbamoyl-L-aspartate + phosphate + H(+)</text>
        <dbReference type="Rhea" id="RHEA:20013"/>
        <dbReference type="ChEBI" id="CHEBI:15378"/>
        <dbReference type="ChEBI" id="CHEBI:29991"/>
        <dbReference type="ChEBI" id="CHEBI:32814"/>
        <dbReference type="ChEBI" id="CHEBI:43474"/>
        <dbReference type="ChEBI" id="CHEBI:58228"/>
        <dbReference type="EC" id="2.1.3.2"/>
    </reaction>
</comment>
<comment type="pathway">
    <text evidence="1">Pyrimidine metabolism; UMP biosynthesis via de novo pathway; (S)-dihydroorotate from bicarbonate: step 2/3.</text>
</comment>
<comment type="subunit">
    <text evidence="1">Heterododecamer (2C3:3R2) of six catalytic PyrB chains organized as two trimers (C3), and six regulatory PyrI chains organized as three dimers (R2).</text>
</comment>
<comment type="similarity">
    <text evidence="1">Belongs to the aspartate/ornithine carbamoyltransferase superfamily. ATCase family.</text>
</comment>
<proteinExistence type="inferred from homology"/>
<evidence type="ECO:0000255" key="1">
    <source>
        <dbReference type="HAMAP-Rule" id="MF_00001"/>
    </source>
</evidence>
<sequence length="307" mass="34140">MPKKCRHLLQTSDLSLDEIKLLLKKASVYANDFNAVSLETKEKMQNKIIVALFFENSTRTVSSFEIASLRLGAKIVKLNMQTSSASKGETLTDTFKNIYAMQPDAIITRHAFSSAPFKLAEFSQCPLINAGSGVSAHPTQALLDLLTLYQHFGSLENLKGKKIAFIGDVKNSRVANSNIKLLQRLGLEIMLCAPSSMLPSVSLKTTHNIEEAIEFADILMSLRTQTERHNAPIFASLKDYGNAYCITQKRLEAHAKNKEIIILHPGPVHRDIDIESAVLEDKRSKVLEQVKNGVAMRMAVLEFLLLD</sequence>
<feature type="chain" id="PRO_1000088770" description="Aspartate carbamoyltransferase catalytic subunit">
    <location>
        <begin position="1"/>
        <end position="307"/>
    </location>
</feature>
<feature type="binding site" evidence="1">
    <location>
        <position position="59"/>
    </location>
    <ligand>
        <name>carbamoyl phosphate</name>
        <dbReference type="ChEBI" id="CHEBI:58228"/>
    </ligand>
</feature>
<feature type="binding site" evidence="1">
    <location>
        <position position="60"/>
    </location>
    <ligand>
        <name>carbamoyl phosphate</name>
        <dbReference type="ChEBI" id="CHEBI:58228"/>
    </ligand>
</feature>
<feature type="binding site" evidence="1">
    <location>
        <position position="87"/>
    </location>
    <ligand>
        <name>L-aspartate</name>
        <dbReference type="ChEBI" id="CHEBI:29991"/>
    </ligand>
</feature>
<feature type="binding site" evidence="1">
    <location>
        <position position="109"/>
    </location>
    <ligand>
        <name>carbamoyl phosphate</name>
        <dbReference type="ChEBI" id="CHEBI:58228"/>
    </ligand>
</feature>
<feature type="binding site" evidence="1">
    <location>
        <position position="137"/>
    </location>
    <ligand>
        <name>carbamoyl phosphate</name>
        <dbReference type="ChEBI" id="CHEBI:58228"/>
    </ligand>
</feature>
<feature type="binding site" evidence="1">
    <location>
        <position position="140"/>
    </location>
    <ligand>
        <name>carbamoyl phosphate</name>
        <dbReference type="ChEBI" id="CHEBI:58228"/>
    </ligand>
</feature>
<feature type="binding site" evidence="1">
    <location>
        <position position="173"/>
    </location>
    <ligand>
        <name>L-aspartate</name>
        <dbReference type="ChEBI" id="CHEBI:29991"/>
    </ligand>
</feature>
<feature type="binding site" evidence="1">
    <location>
        <position position="223"/>
    </location>
    <ligand>
        <name>L-aspartate</name>
        <dbReference type="ChEBI" id="CHEBI:29991"/>
    </ligand>
</feature>
<feature type="binding site" evidence="1">
    <location>
        <position position="266"/>
    </location>
    <ligand>
        <name>carbamoyl phosphate</name>
        <dbReference type="ChEBI" id="CHEBI:58228"/>
    </ligand>
</feature>
<feature type="binding site" evidence="1">
    <location>
        <position position="267"/>
    </location>
    <ligand>
        <name>carbamoyl phosphate</name>
        <dbReference type="ChEBI" id="CHEBI:58228"/>
    </ligand>
</feature>
<keyword id="KW-0665">Pyrimidine biosynthesis</keyword>
<keyword id="KW-0808">Transferase</keyword>
<name>PYRB_HELPS</name>
<accession>B2USJ6</accession>
<organism>
    <name type="scientific">Helicobacter pylori (strain Shi470)</name>
    <dbReference type="NCBI Taxonomy" id="512562"/>
    <lineage>
        <taxon>Bacteria</taxon>
        <taxon>Pseudomonadati</taxon>
        <taxon>Campylobacterota</taxon>
        <taxon>Epsilonproteobacteria</taxon>
        <taxon>Campylobacterales</taxon>
        <taxon>Helicobacteraceae</taxon>
        <taxon>Helicobacter</taxon>
    </lineage>
</organism>
<reference key="1">
    <citation type="submission" date="2008-05" db="EMBL/GenBank/DDBJ databases">
        <title>Genome sequence of Helicobacter pylori from the remote Amazon: traces of Asian ancestry of the first Americans.</title>
        <authorList>
            <person name="Kersulyte D."/>
            <person name="Kalia A."/>
            <person name="Gilman R.H."/>
            <person name="Berg D.E."/>
        </authorList>
    </citation>
    <scope>NUCLEOTIDE SEQUENCE [LARGE SCALE GENOMIC DNA]</scope>
    <source>
        <strain>Shi470</strain>
    </source>
</reference>
<protein>
    <recommendedName>
        <fullName evidence="1">Aspartate carbamoyltransferase catalytic subunit</fullName>
        <ecNumber evidence="1">2.1.3.2</ecNumber>
    </recommendedName>
    <alternativeName>
        <fullName evidence="1">Aspartate transcarbamylase</fullName>
        <shortName evidence="1">ATCase</shortName>
    </alternativeName>
</protein>
<dbReference type="EC" id="2.1.3.2" evidence="1"/>
<dbReference type="EMBL" id="CP001072">
    <property type="protein sequence ID" value="ACD47828.1"/>
    <property type="molecule type" value="Genomic_DNA"/>
</dbReference>
<dbReference type="RefSeq" id="WP_001124595.1">
    <property type="nucleotide sequence ID" value="NC_010698.2"/>
</dbReference>
<dbReference type="SMR" id="B2USJ6"/>
<dbReference type="KEGG" id="hps:HPSH_01890"/>
<dbReference type="HOGENOM" id="CLU_043846_2_0_7"/>
<dbReference type="UniPathway" id="UPA00070">
    <property type="reaction ID" value="UER00116"/>
</dbReference>
<dbReference type="GO" id="GO:0005829">
    <property type="term" value="C:cytosol"/>
    <property type="evidence" value="ECO:0007669"/>
    <property type="project" value="TreeGrafter"/>
</dbReference>
<dbReference type="GO" id="GO:0016597">
    <property type="term" value="F:amino acid binding"/>
    <property type="evidence" value="ECO:0007669"/>
    <property type="project" value="InterPro"/>
</dbReference>
<dbReference type="GO" id="GO:0004070">
    <property type="term" value="F:aspartate carbamoyltransferase activity"/>
    <property type="evidence" value="ECO:0007669"/>
    <property type="project" value="UniProtKB-UniRule"/>
</dbReference>
<dbReference type="GO" id="GO:0006207">
    <property type="term" value="P:'de novo' pyrimidine nucleobase biosynthetic process"/>
    <property type="evidence" value="ECO:0007669"/>
    <property type="project" value="InterPro"/>
</dbReference>
<dbReference type="GO" id="GO:0044205">
    <property type="term" value="P:'de novo' UMP biosynthetic process"/>
    <property type="evidence" value="ECO:0007669"/>
    <property type="project" value="UniProtKB-UniRule"/>
</dbReference>
<dbReference type="GO" id="GO:0006520">
    <property type="term" value="P:amino acid metabolic process"/>
    <property type="evidence" value="ECO:0007669"/>
    <property type="project" value="InterPro"/>
</dbReference>
<dbReference type="FunFam" id="3.40.50.1370:FF:000037">
    <property type="entry name" value="Aspartate carbamoyltransferase"/>
    <property type="match status" value="1"/>
</dbReference>
<dbReference type="Gene3D" id="3.40.50.1370">
    <property type="entry name" value="Aspartate/ornithine carbamoyltransferase"/>
    <property type="match status" value="2"/>
</dbReference>
<dbReference type="HAMAP" id="MF_00001">
    <property type="entry name" value="Asp_carb_tr"/>
    <property type="match status" value="1"/>
</dbReference>
<dbReference type="InterPro" id="IPR006132">
    <property type="entry name" value="Asp/Orn_carbamoyltranf_P-bd"/>
</dbReference>
<dbReference type="InterPro" id="IPR006130">
    <property type="entry name" value="Asp/Orn_carbamoylTrfase"/>
</dbReference>
<dbReference type="InterPro" id="IPR036901">
    <property type="entry name" value="Asp/Orn_carbamoylTrfase_sf"/>
</dbReference>
<dbReference type="InterPro" id="IPR002082">
    <property type="entry name" value="Asp_carbamoyltransf"/>
</dbReference>
<dbReference type="InterPro" id="IPR006131">
    <property type="entry name" value="Asp_carbamoyltransf_Asp/Orn-bd"/>
</dbReference>
<dbReference type="NCBIfam" id="TIGR00670">
    <property type="entry name" value="asp_carb_tr"/>
    <property type="match status" value="1"/>
</dbReference>
<dbReference type="NCBIfam" id="NF002032">
    <property type="entry name" value="PRK00856.1"/>
    <property type="match status" value="1"/>
</dbReference>
<dbReference type="PANTHER" id="PTHR45753:SF6">
    <property type="entry name" value="ASPARTATE CARBAMOYLTRANSFERASE"/>
    <property type="match status" value="1"/>
</dbReference>
<dbReference type="PANTHER" id="PTHR45753">
    <property type="entry name" value="ORNITHINE CARBAMOYLTRANSFERASE, MITOCHONDRIAL"/>
    <property type="match status" value="1"/>
</dbReference>
<dbReference type="Pfam" id="PF00185">
    <property type="entry name" value="OTCace"/>
    <property type="match status" value="1"/>
</dbReference>
<dbReference type="Pfam" id="PF02729">
    <property type="entry name" value="OTCace_N"/>
    <property type="match status" value="1"/>
</dbReference>
<dbReference type="PRINTS" id="PR00100">
    <property type="entry name" value="AOTCASE"/>
</dbReference>
<dbReference type="PRINTS" id="PR00101">
    <property type="entry name" value="ATCASE"/>
</dbReference>
<dbReference type="SUPFAM" id="SSF53671">
    <property type="entry name" value="Aspartate/ornithine carbamoyltransferase"/>
    <property type="match status" value="1"/>
</dbReference>
<dbReference type="PROSITE" id="PS00097">
    <property type="entry name" value="CARBAMOYLTRANSFERASE"/>
    <property type="match status" value="1"/>
</dbReference>